<comment type="function">
    <text evidence="1">Endonuclease that specifically degrades the RNA of RNA-DNA hybrids.</text>
</comment>
<comment type="catalytic activity">
    <reaction evidence="1">
        <text>Endonucleolytic cleavage to 5'-phosphomonoester.</text>
        <dbReference type="EC" id="3.1.26.4"/>
    </reaction>
</comment>
<comment type="cofactor">
    <cofactor evidence="1">
        <name>Mg(2+)</name>
        <dbReference type="ChEBI" id="CHEBI:18420"/>
    </cofactor>
    <text evidence="1">Binds 1 Mg(2+) ion per subunit. May bind a second metal ion at a regulatory site, or after substrate binding.</text>
</comment>
<comment type="subunit">
    <text evidence="1">Monomer.</text>
</comment>
<comment type="subcellular location">
    <subcellularLocation>
        <location evidence="1">Cytoplasm</location>
    </subcellularLocation>
</comment>
<comment type="similarity">
    <text evidence="1">Belongs to the RNase H family.</text>
</comment>
<evidence type="ECO:0000255" key="1">
    <source>
        <dbReference type="HAMAP-Rule" id="MF_00042"/>
    </source>
</evidence>
<evidence type="ECO:0000255" key="2">
    <source>
        <dbReference type="PROSITE-ProRule" id="PRU00408"/>
    </source>
</evidence>
<gene>
    <name evidence="1" type="primary">rnhA</name>
    <name type="ordered locus">VSAL_I2399</name>
</gene>
<name>RNH_ALISL</name>
<proteinExistence type="inferred from homology"/>
<accession>B6EJV2</accession>
<organism>
    <name type="scientific">Aliivibrio salmonicida (strain LFI1238)</name>
    <name type="common">Vibrio salmonicida (strain LFI1238)</name>
    <dbReference type="NCBI Taxonomy" id="316275"/>
    <lineage>
        <taxon>Bacteria</taxon>
        <taxon>Pseudomonadati</taxon>
        <taxon>Pseudomonadota</taxon>
        <taxon>Gammaproteobacteria</taxon>
        <taxon>Vibrionales</taxon>
        <taxon>Vibrionaceae</taxon>
        <taxon>Aliivibrio</taxon>
    </lineage>
</organism>
<dbReference type="EC" id="3.1.26.4" evidence="1"/>
<dbReference type="EMBL" id="FM178379">
    <property type="protein sequence ID" value="CAQ80083.1"/>
    <property type="molecule type" value="Genomic_DNA"/>
</dbReference>
<dbReference type="RefSeq" id="WP_012550891.1">
    <property type="nucleotide sequence ID" value="NC_011312.1"/>
</dbReference>
<dbReference type="SMR" id="B6EJV2"/>
<dbReference type="KEGG" id="vsa:VSAL_I2399"/>
<dbReference type="eggNOG" id="COG0328">
    <property type="taxonomic scope" value="Bacteria"/>
</dbReference>
<dbReference type="HOGENOM" id="CLU_030894_6_0_6"/>
<dbReference type="Proteomes" id="UP000001730">
    <property type="component" value="Chromosome 1"/>
</dbReference>
<dbReference type="GO" id="GO:0005737">
    <property type="term" value="C:cytoplasm"/>
    <property type="evidence" value="ECO:0007669"/>
    <property type="project" value="UniProtKB-SubCell"/>
</dbReference>
<dbReference type="GO" id="GO:0000287">
    <property type="term" value="F:magnesium ion binding"/>
    <property type="evidence" value="ECO:0007669"/>
    <property type="project" value="UniProtKB-UniRule"/>
</dbReference>
<dbReference type="GO" id="GO:0003676">
    <property type="term" value="F:nucleic acid binding"/>
    <property type="evidence" value="ECO:0007669"/>
    <property type="project" value="InterPro"/>
</dbReference>
<dbReference type="GO" id="GO:0004523">
    <property type="term" value="F:RNA-DNA hybrid ribonuclease activity"/>
    <property type="evidence" value="ECO:0007669"/>
    <property type="project" value="UniProtKB-UniRule"/>
</dbReference>
<dbReference type="GO" id="GO:0043137">
    <property type="term" value="P:DNA replication, removal of RNA primer"/>
    <property type="evidence" value="ECO:0007669"/>
    <property type="project" value="TreeGrafter"/>
</dbReference>
<dbReference type="CDD" id="cd09278">
    <property type="entry name" value="RNase_HI_prokaryote_like"/>
    <property type="match status" value="1"/>
</dbReference>
<dbReference type="FunFam" id="3.30.420.10:FF:000008">
    <property type="entry name" value="Ribonuclease H"/>
    <property type="match status" value="1"/>
</dbReference>
<dbReference type="Gene3D" id="3.30.420.10">
    <property type="entry name" value="Ribonuclease H-like superfamily/Ribonuclease H"/>
    <property type="match status" value="1"/>
</dbReference>
<dbReference type="HAMAP" id="MF_00042">
    <property type="entry name" value="RNase_H"/>
    <property type="match status" value="1"/>
</dbReference>
<dbReference type="InterPro" id="IPR050092">
    <property type="entry name" value="RNase_H"/>
</dbReference>
<dbReference type="InterPro" id="IPR012337">
    <property type="entry name" value="RNaseH-like_sf"/>
</dbReference>
<dbReference type="InterPro" id="IPR002156">
    <property type="entry name" value="RNaseH_domain"/>
</dbReference>
<dbReference type="InterPro" id="IPR036397">
    <property type="entry name" value="RNaseH_sf"/>
</dbReference>
<dbReference type="InterPro" id="IPR022892">
    <property type="entry name" value="RNaseHI"/>
</dbReference>
<dbReference type="NCBIfam" id="NF001236">
    <property type="entry name" value="PRK00203.1"/>
    <property type="match status" value="1"/>
</dbReference>
<dbReference type="PANTHER" id="PTHR10642">
    <property type="entry name" value="RIBONUCLEASE H1"/>
    <property type="match status" value="1"/>
</dbReference>
<dbReference type="PANTHER" id="PTHR10642:SF26">
    <property type="entry name" value="RIBONUCLEASE H1"/>
    <property type="match status" value="1"/>
</dbReference>
<dbReference type="Pfam" id="PF00075">
    <property type="entry name" value="RNase_H"/>
    <property type="match status" value="1"/>
</dbReference>
<dbReference type="SUPFAM" id="SSF53098">
    <property type="entry name" value="Ribonuclease H-like"/>
    <property type="match status" value="1"/>
</dbReference>
<dbReference type="PROSITE" id="PS50879">
    <property type="entry name" value="RNASE_H_1"/>
    <property type="match status" value="1"/>
</dbReference>
<keyword id="KW-0963">Cytoplasm</keyword>
<keyword id="KW-0255">Endonuclease</keyword>
<keyword id="KW-0378">Hydrolase</keyword>
<keyword id="KW-0460">Magnesium</keyword>
<keyword id="KW-0479">Metal-binding</keyword>
<keyword id="KW-0540">Nuclease</keyword>
<sequence length="157" mass="17711">MITEIMKQVEIFTDGSCLGNPGPGGYGIVMRYKGTEKTFSGGFNQTTNNRMEMLAAVVALRNLKEPCIVVLTTDSQYVRQGITQWIHGWKKRGWKKADKKPVVNADLWKQLDAEAERHTVDWRWVKGHAGHRENEMCDDLARTAAENPTQDDTGYPG</sequence>
<protein>
    <recommendedName>
        <fullName evidence="1">Ribonuclease H</fullName>
        <shortName evidence="1">RNase H</shortName>
        <ecNumber evidence="1">3.1.26.4</ecNumber>
    </recommendedName>
</protein>
<reference key="1">
    <citation type="journal article" date="2008" name="BMC Genomics">
        <title>The genome sequence of the fish pathogen Aliivibrio salmonicida strain LFI1238 shows extensive evidence of gene decay.</title>
        <authorList>
            <person name="Hjerde E."/>
            <person name="Lorentzen M.S."/>
            <person name="Holden M.T."/>
            <person name="Seeger K."/>
            <person name="Paulsen S."/>
            <person name="Bason N."/>
            <person name="Churcher C."/>
            <person name="Harris D."/>
            <person name="Norbertczak H."/>
            <person name="Quail M.A."/>
            <person name="Sanders S."/>
            <person name="Thurston S."/>
            <person name="Parkhill J."/>
            <person name="Willassen N.P."/>
            <person name="Thomson N.R."/>
        </authorList>
    </citation>
    <scope>NUCLEOTIDE SEQUENCE [LARGE SCALE GENOMIC DNA]</scope>
    <source>
        <strain>LFI1238</strain>
    </source>
</reference>
<feature type="chain" id="PRO_1000090890" description="Ribonuclease H">
    <location>
        <begin position="1"/>
        <end position="157"/>
    </location>
</feature>
<feature type="domain" description="RNase H type-1" evidence="2">
    <location>
        <begin position="5"/>
        <end position="146"/>
    </location>
</feature>
<feature type="binding site" evidence="1">
    <location>
        <position position="14"/>
    </location>
    <ligand>
        <name>Mg(2+)</name>
        <dbReference type="ChEBI" id="CHEBI:18420"/>
        <label>1</label>
    </ligand>
</feature>
<feature type="binding site" evidence="1">
    <location>
        <position position="14"/>
    </location>
    <ligand>
        <name>Mg(2+)</name>
        <dbReference type="ChEBI" id="CHEBI:18420"/>
        <label>2</label>
    </ligand>
</feature>
<feature type="binding site" evidence="1">
    <location>
        <position position="52"/>
    </location>
    <ligand>
        <name>Mg(2+)</name>
        <dbReference type="ChEBI" id="CHEBI:18420"/>
        <label>1</label>
    </ligand>
</feature>
<feature type="binding site" evidence="1">
    <location>
        <position position="74"/>
    </location>
    <ligand>
        <name>Mg(2+)</name>
        <dbReference type="ChEBI" id="CHEBI:18420"/>
        <label>1</label>
    </ligand>
</feature>
<feature type="binding site" evidence="1">
    <location>
        <position position="138"/>
    </location>
    <ligand>
        <name>Mg(2+)</name>
        <dbReference type="ChEBI" id="CHEBI:18420"/>
        <label>2</label>
    </ligand>
</feature>